<dbReference type="EMBL" id="U46933">
    <property type="protein sequence ID" value="AAC54900.1"/>
    <property type="molecule type" value="Genomic_DNA"/>
</dbReference>
<dbReference type="RefSeq" id="NP_043874.1">
    <property type="nucleotide sequence ID" value="NC_001720.1"/>
</dbReference>
<dbReference type="SMR" id="Q64747"/>
<dbReference type="KEGG" id="vg:1733468"/>
<dbReference type="Proteomes" id="UP000001594">
    <property type="component" value="Segment"/>
</dbReference>
<reference key="1">
    <citation type="journal article" date="1996" name="J. Virol.">
        <title>The complete DNA sequence and genomic organization of the avian adenovirus CELO.</title>
        <authorList>
            <person name="Chiocca S."/>
            <person name="Kurzbauer R."/>
            <person name="Schaffner G."/>
            <person name="Baker A."/>
            <person name="Mautner V."/>
            <person name="Cotten M."/>
        </authorList>
    </citation>
    <scope>NUCLEOTIDE SEQUENCE [LARGE SCALE GENOMIC DNA]</scope>
</reference>
<organism>
    <name type="scientific">Fowl adenovirus A serotype 1 (strain CELO / Phelps)</name>
    <name type="common">FAdV-1</name>
    <name type="synonym">Avian adenovirus gal1 (strain Phelps)</name>
    <dbReference type="NCBI Taxonomy" id="10553"/>
    <lineage>
        <taxon>Viruses</taxon>
        <taxon>Varidnaviria</taxon>
        <taxon>Bamfordvirae</taxon>
        <taxon>Preplasmiviricota</taxon>
        <taxon>Tectiliviricetes</taxon>
        <taxon>Rowavirales</taxon>
        <taxon>Adenoviridae</taxon>
        <taxon>Aviadenovirus</taxon>
        <taxon>Fowl aviadenovirus A</taxon>
    </lineage>
</organism>
<organismHost>
    <name type="scientific">Galliformes</name>
    <dbReference type="NCBI Taxonomy" id="8976"/>
</organismHost>
<accession>Q64747</accession>
<feature type="signal peptide" evidence="1">
    <location>
        <begin position="1"/>
        <end position="18"/>
    </location>
</feature>
<feature type="chain" id="PRO_0000338998" description="Uncharacterized protein ORF3">
    <location>
        <begin position="19"/>
        <end position="104"/>
    </location>
</feature>
<feature type="glycosylation site" description="N-linked (GlcNAc...) asparagine; by host" evidence="1">
    <location>
        <position position="27"/>
    </location>
</feature>
<gene>
    <name type="ORF">3</name>
</gene>
<evidence type="ECO:0000255" key="1"/>
<sequence>MGVEGMWNVFLFSLQVAALPSIKCSINGSGFSSTKGRQYREAWGAISPSDSMELIRLSEIASGKHAHKALKRLLALESLPPQSTRVFSSPRSHRRMALAATFPS</sequence>
<protein>
    <recommendedName>
        <fullName>Uncharacterized protein ORF3</fullName>
    </recommendedName>
</protein>
<name>YO3_ADEG1</name>
<keyword id="KW-0325">Glycoprotein</keyword>
<keyword id="KW-1185">Reference proteome</keyword>
<keyword id="KW-0732">Signal</keyword>
<proteinExistence type="inferred from homology"/>